<reference key="1">
    <citation type="journal article" date="2006" name="Proc. Natl. Acad. Sci. U.S.A.">
        <title>Burkholderia xenovorans LB400 harbors a multi-replicon, 9.73-Mbp genome shaped for versatility.</title>
        <authorList>
            <person name="Chain P.S.G."/>
            <person name="Denef V.J."/>
            <person name="Konstantinidis K.T."/>
            <person name="Vergez L.M."/>
            <person name="Agullo L."/>
            <person name="Reyes V.L."/>
            <person name="Hauser L."/>
            <person name="Cordova M."/>
            <person name="Gomez L."/>
            <person name="Gonzalez M."/>
            <person name="Land M."/>
            <person name="Lao V."/>
            <person name="Larimer F."/>
            <person name="LiPuma J.J."/>
            <person name="Mahenthiralingam E."/>
            <person name="Malfatti S.A."/>
            <person name="Marx C.J."/>
            <person name="Parnell J.J."/>
            <person name="Ramette A."/>
            <person name="Richardson P."/>
            <person name="Seeger M."/>
            <person name="Smith D."/>
            <person name="Spilker T."/>
            <person name="Sul W.J."/>
            <person name="Tsoi T.V."/>
            <person name="Ulrich L.E."/>
            <person name="Zhulin I.B."/>
            <person name="Tiedje J.M."/>
        </authorList>
    </citation>
    <scope>NUCLEOTIDE SEQUENCE [LARGE SCALE GENOMIC DNA]</scope>
    <source>
        <strain>LB400</strain>
    </source>
</reference>
<protein>
    <recommendedName>
        <fullName evidence="1">UPF0434 protein Bxeno_A3631</fullName>
    </recommendedName>
</protein>
<sequence length="67" mass="7239">MDARLLEILVCPICKGPLSYDRAAQELICNADKLAYPIRDGIPVMLVDEARQTVEGTPVDLNPGSVA</sequence>
<keyword id="KW-1185">Reference proteome</keyword>
<feature type="chain" id="PRO_0000291079" description="UPF0434 protein Bxeno_A3631">
    <location>
        <begin position="1"/>
        <end position="67"/>
    </location>
</feature>
<accession>Q13US0</accession>
<organism>
    <name type="scientific">Paraburkholderia xenovorans (strain LB400)</name>
    <dbReference type="NCBI Taxonomy" id="266265"/>
    <lineage>
        <taxon>Bacteria</taxon>
        <taxon>Pseudomonadati</taxon>
        <taxon>Pseudomonadota</taxon>
        <taxon>Betaproteobacteria</taxon>
        <taxon>Burkholderiales</taxon>
        <taxon>Burkholderiaceae</taxon>
        <taxon>Paraburkholderia</taxon>
    </lineage>
</organism>
<dbReference type="EMBL" id="CP000270">
    <property type="protein sequence ID" value="ABE32169.1"/>
    <property type="molecule type" value="Genomic_DNA"/>
</dbReference>
<dbReference type="RefSeq" id="WP_007180583.1">
    <property type="nucleotide sequence ID" value="NZ_CP008760.1"/>
</dbReference>
<dbReference type="SMR" id="Q13US0"/>
<dbReference type="STRING" id="266265.Bxe_A0765"/>
<dbReference type="KEGG" id="bxb:DR64_2933"/>
<dbReference type="KEGG" id="bxe:Bxe_A0765"/>
<dbReference type="eggNOG" id="COG2835">
    <property type="taxonomic scope" value="Bacteria"/>
</dbReference>
<dbReference type="OrthoDB" id="9812205at2"/>
<dbReference type="Proteomes" id="UP000001817">
    <property type="component" value="Chromosome 1"/>
</dbReference>
<dbReference type="GO" id="GO:0005829">
    <property type="term" value="C:cytosol"/>
    <property type="evidence" value="ECO:0007669"/>
    <property type="project" value="TreeGrafter"/>
</dbReference>
<dbReference type="FunFam" id="2.20.25.10:FF:000002">
    <property type="entry name" value="UPF0434 protein YcaR"/>
    <property type="match status" value="1"/>
</dbReference>
<dbReference type="Gene3D" id="2.20.25.10">
    <property type="match status" value="1"/>
</dbReference>
<dbReference type="HAMAP" id="MF_01187">
    <property type="entry name" value="UPF0434"/>
    <property type="match status" value="1"/>
</dbReference>
<dbReference type="InterPro" id="IPR005651">
    <property type="entry name" value="Trm112-like"/>
</dbReference>
<dbReference type="PANTHER" id="PTHR33505:SF4">
    <property type="entry name" value="PROTEIN PREY, MITOCHONDRIAL"/>
    <property type="match status" value="1"/>
</dbReference>
<dbReference type="PANTHER" id="PTHR33505">
    <property type="entry name" value="ZGC:162634"/>
    <property type="match status" value="1"/>
</dbReference>
<dbReference type="Pfam" id="PF03966">
    <property type="entry name" value="Trm112p"/>
    <property type="match status" value="1"/>
</dbReference>
<dbReference type="SUPFAM" id="SSF158997">
    <property type="entry name" value="Trm112p-like"/>
    <property type="match status" value="1"/>
</dbReference>
<name>Y3631_PARXL</name>
<proteinExistence type="inferred from homology"/>
<gene>
    <name type="ordered locus">Bxeno_A3631</name>
    <name type="ORF">Bxe_A0765</name>
</gene>
<evidence type="ECO:0000255" key="1">
    <source>
        <dbReference type="HAMAP-Rule" id="MF_01187"/>
    </source>
</evidence>
<comment type="similarity">
    <text evidence="1">Belongs to the UPF0434 family.</text>
</comment>